<accession>Q09420</accession>
<name>YRN6_CAEEL</name>
<sequence length="136" mass="14169">MHLFFAHILAVSIVVRITDSCAATSGTTTTTIAPTTCTTCTTDLIGIVTGNDGDMTPTSAITADANGCSVITYTCERTPVVATDVVLITFYSDSQNPTDVGTENGVGTANVVMNCVNGQWVKEGIVINDVECQIIT</sequence>
<feature type="chain" id="PRO_0000065420" description="Uncharacterized protein R07B1.6">
    <location>
        <begin position="1"/>
        <end position="136"/>
    </location>
</feature>
<organism>
    <name type="scientific">Caenorhabditis elegans</name>
    <dbReference type="NCBI Taxonomy" id="6239"/>
    <lineage>
        <taxon>Eukaryota</taxon>
        <taxon>Metazoa</taxon>
        <taxon>Ecdysozoa</taxon>
        <taxon>Nematoda</taxon>
        <taxon>Chromadorea</taxon>
        <taxon>Rhabditida</taxon>
        <taxon>Rhabditina</taxon>
        <taxon>Rhabditomorpha</taxon>
        <taxon>Rhabditoidea</taxon>
        <taxon>Rhabditidae</taxon>
        <taxon>Peloderinae</taxon>
        <taxon>Caenorhabditis</taxon>
    </lineage>
</organism>
<proteinExistence type="predicted"/>
<dbReference type="EMBL" id="Z48621">
    <property type="protein sequence ID" value="CAA88543.1"/>
    <property type="molecule type" value="Genomic_DNA"/>
</dbReference>
<dbReference type="PIR" id="T23996">
    <property type="entry name" value="T23996"/>
</dbReference>
<dbReference type="RefSeq" id="NP_509654.1">
    <property type="nucleotide sequence ID" value="NM_077253.4"/>
</dbReference>
<dbReference type="FunCoup" id="Q09420">
    <property type="interactions" value="45"/>
</dbReference>
<dbReference type="STRING" id="6239.R07B1.6a.1"/>
<dbReference type="PaxDb" id="6239-R07B1.6"/>
<dbReference type="EnsemblMetazoa" id="R07B1.6a.1">
    <property type="protein sequence ID" value="R07B1.6a.1"/>
    <property type="gene ID" value="WBGene00011078"/>
</dbReference>
<dbReference type="GeneID" id="187647"/>
<dbReference type="KEGG" id="cel:CELE_R07B1.6"/>
<dbReference type="UCSC" id="R07B1.6">
    <property type="organism name" value="c. elegans"/>
</dbReference>
<dbReference type="AGR" id="WB:WBGene00011078"/>
<dbReference type="CTD" id="187647"/>
<dbReference type="WormBase" id="R07B1.6a">
    <property type="protein sequence ID" value="CE01632"/>
    <property type="gene ID" value="WBGene00011078"/>
</dbReference>
<dbReference type="eggNOG" id="ENOG502THZJ">
    <property type="taxonomic scope" value="Eukaryota"/>
</dbReference>
<dbReference type="GeneTree" id="ENSGT00970000196819"/>
<dbReference type="HOGENOM" id="CLU_138748_0_0_1"/>
<dbReference type="InParanoid" id="Q09420"/>
<dbReference type="OMA" id="ANNCATI"/>
<dbReference type="OrthoDB" id="5857129at2759"/>
<dbReference type="PhylomeDB" id="Q09420"/>
<dbReference type="PRO" id="PR:Q09420"/>
<dbReference type="Proteomes" id="UP000001940">
    <property type="component" value="Chromosome X"/>
</dbReference>
<dbReference type="Bgee" id="WBGene00011078">
    <property type="expression patterns" value="Expressed in pharyngeal muscle cell (C elegans) and 2 other cell types or tissues"/>
</dbReference>
<dbReference type="InterPro" id="IPR002601">
    <property type="entry name" value="C6_domain"/>
</dbReference>
<dbReference type="PANTHER" id="PTHR21629">
    <property type="entry name" value="C6 DOMAIN-CONTAINING PROTEIN"/>
    <property type="match status" value="1"/>
</dbReference>
<dbReference type="PANTHER" id="PTHR21629:SF10">
    <property type="entry name" value="C6 DOMAIN-CONTAINING PROTEIN"/>
    <property type="match status" value="1"/>
</dbReference>
<dbReference type="Pfam" id="PF01681">
    <property type="entry name" value="C6"/>
    <property type="match status" value="1"/>
</dbReference>
<dbReference type="SMART" id="SM01048">
    <property type="entry name" value="C6"/>
    <property type="match status" value="1"/>
</dbReference>
<protein>
    <recommendedName>
        <fullName>Uncharacterized protein R07B1.6</fullName>
    </recommendedName>
</protein>
<keyword id="KW-1185">Reference proteome</keyword>
<reference key="1">
    <citation type="journal article" date="1998" name="Science">
        <title>Genome sequence of the nematode C. elegans: a platform for investigating biology.</title>
        <authorList>
            <consortium name="The C. elegans sequencing consortium"/>
        </authorList>
    </citation>
    <scope>NUCLEOTIDE SEQUENCE [LARGE SCALE GENOMIC DNA]</scope>
    <source>
        <strain>Bristol N2</strain>
    </source>
</reference>
<gene>
    <name type="ORF">R07B1.6</name>
</gene>